<evidence type="ECO:0000255" key="1">
    <source>
        <dbReference type="HAMAP-Rule" id="MF_00537"/>
    </source>
</evidence>
<evidence type="ECO:0000305" key="2"/>
<name>RS14_BARHE</name>
<organism>
    <name type="scientific">Bartonella henselae (strain ATCC 49882 / DSM 28221 / CCUG 30454 / Houston 1)</name>
    <name type="common">Rochalimaea henselae</name>
    <dbReference type="NCBI Taxonomy" id="283166"/>
    <lineage>
        <taxon>Bacteria</taxon>
        <taxon>Pseudomonadati</taxon>
        <taxon>Pseudomonadota</taxon>
        <taxon>Alphaproteobacteria</taxon>
        <taxon>Hyphomicrobiales</taxon>
        <taxon>Bartonellaceae</taxon>
        <taxon>Bartonella</taxon>
    </lineage>
</organism>
<gene>
    <name evidence="1" type="primary">rpsN</name>
    <name type="ordered locus">BH10380</name>
</gene>
<proteinExistence type="inferred from homology"/>
<accession>Q6G2X8</accession>
<feature type="chain" id="PRO_1000128308" description="Small ribosomal subunit protein uS14">
    <location>
        <begin position="1"/>
        <end position="101"/>
    </location>
</feature>
<comment type="function">
    <text evidence="1">Binds 16S rRNA, required for the assembly of 30S particles and may also be responsible for determining the conformation of the 16S rRNA at the A site.</text>
</comment>
<comment type="subunit">
    <text evidence="1">Part of the 30S ribosomal subunit. Contacts proteins S3 and S10.</text>
</comment>
<comment type="similarity">
    <text evidence="1">Belongs to the universal ribosomal protein uS14 family.</text>
</comment>
<keyword id="KW-0687">Ribonucleoprotein</keyword>
<keyword id="KW-0689">Ribosomal protein</keyword>
<keyword id="KW-0694">RNA-binding</keyword>
<keyword id="KW-0699">rRNA-binding</keyword>
<dbReference type="EMBL" id="BX897699">
    <property type="protein sequence ID" value="CAF27829.1"/>
    <property type="molecule type" value="Genomic_DNA"/>
</dbReference>
<dbReference type="RefSeq" id="WP_011180901.1">
    <property type="nucleotide sequence ID" value="NZ_LRIJ02000001.1"/>
</dbReference>
<dbReference type="SMR" id="Q6G2X8"/>
<dbReference type="PaxDb" id="283166-BH10380"/>
<dbReference type="EnsemblBacteria" id="CAF27829">
    <property type="protein sequence ID" value="CAF27829"/>
    <property type="gene ID" value="BH10380"/>
</dbReference>
<dbReference type="GeneID" id="92985276"/>
<dbReference type="KEGG" id="bhe:BH10380"/>
<dbReference type="eggNOG" id="COG0199">
    <property type="taxonomic scope" value="Bacteria"/>
</dbReference>
<dbReference type="OrthoDB" id="9810484at2"/>
<dbReference type="Proteomes" id="UP000000421">
    <property type="component" value="Chromosome"/>
</dbReference>
<dbReference type="GO" id="GO:0005737">
    <property type="term" value="C:cytoplasm"/>
    <property type="evidence" value="ECO:0007669"/>
    <property type="project" value="UniProtKB-ARBA"/>
</dbReference>
<dbReference type="GO" id="GO:0015935">
    <property type="term" value="C:small ribosomal subunit"/>
    <property type="evidence" value="ECO:0007669"/>
    <property type="project" value="TreeGrafter"/>
</dbReference>
<dbReference type="GO" id="GO:0019843">
    <property type="term" value="F:rRNA binding"/>
    <property type="evidence" value="ECO:0007669"/>
    <property type="project" value="UniProtKB-UniRule"/>
</dbReference>
<dbReference type="GO" id="GO:0003735">
    <property type="term" value="F:structural constituent of ribosome"/>
    <property type="evidence" value="ECO:0007669"/>
    <property type="project" value="InterPro"/>
</dbReference>
<dbReference type="GO" id="GO:0006412">
    <property type="term" value="P:translation"/>
    <property type="evidence" value="ECO:0007669"/>
    <property type="project" value="UniProtKB-UniRule"/>
</dbReference>
<dbReference type="FunFam" id="1.10.287.1480:FF:000001">
    <property type="entry name" value="30S ribosomal protein S14"/>
    <property type="match status" value="1"/>
</dbReference>
<dbReference type="Gene3D" id="1.10.287.1480">
    <property type="match status" value="1"/>
</dbReference>
<dbReference type="HAMAP" id="MF_00537">
    <property type="entry name" value="Ribosomal_uS14_1"/>
    <property type="match status" value="1"/>
</dbReference>
<dbReference type="InterPro" id="IPR001209">
    <property type="entry name" value="Ribosomal_uS14"/>
</dbReference>
<dbReference type="InterPro" id="IPR023036">
    <property type="entry name" value="Ribosomal_uS14_bac/plastid"/>
</dbReference>
<dbReference type="InterPro" id="IPR018271">
    <property type="entry name" value="Ribosomal_uS14_CS"/>
</dbReference>
<dbReference type="NCBIfam" id="NF006477">
    <property type="entry name" value="PRK08881.1"/>
    <property type="match status" value="1"/>
</dbReference>
<dbReference type="PANTHER" id="PTHR19836">
    <property type="entry name" value="30S RIBOSOMAL PROTEIN S14"/>
    <property type="match status" value="1"/>
</dbReference>
<dbReference type="PANTHER" id="PTHR19836:SF19">
    <property type="entry name" value="SMALL RIBOSOMAL SUBUNIT PROTEIN US14M"/>
    <property type="match status" value="1"/>
</dbReference>
<dbReference type="Pfam" id="PF00253">
    <property type="entry name" value="Ribosomal_S14"/>
    <property type="match status" value="1"/>
</dbReference>
<dbReference type="SUPFAM" id="SSF57716">
    <property type="entry name" value="Glucocorticoid receptor-like (DNA-binding domain)"/>
    <property type="match status" value="1"/>
</dbReference>
<dbReference type="PROSITE" id="PS00527">
    <property type="entry name" value="RIBOSOMAL_S14"/>
    <property type="match status" value="1"/>
</dbReference>
<reference key="1">
    <citation type="journal article" date="2004" name="Proc. Natl. Acad. Sci. U.S.A.">
        <title>The louse-borne human pathogen Bartonella quintana is a genomic derivative of the zoonotic agent Bartonella henselae.</title>
        <authorList>
            <person name="Alsmark U.C.M."/>
            <person name="Frank A.C."/>
            <person name="Karlberg E.O."/>
            <person name="Legault B.-A."/>
            <person name="Ardell D.H."/>
            <person name="Canbaeck B."/>
            <person name="Eriksson A.-S."/>
            <person name="Naeslund A.K."/>
            <person name="Handley S.A."/>
            <person name="Huvet M."/>
            <person name="La Scola B."/>
            <person name="Holmberg M."/>
            <person name="Andersson S.G.E."/>
        </authorList>
    </citation>
    <scope>NUCLEOTIDE SEQUENCE [LARGE SCALE GENOMIC DNA]</scope>
    <source>
        <strain>ATCC 49882 / DSM 28221 / CCUG 30454 / Houston 1</strain>
    </source>
</reference>
<protein>
    <recommendedName>
        <fullName evidence="1">Small ribosomal subunit protein uS14</fullName>
    </recommendedName>
    <alternativeName>
        <fullName evidence="2">30S ribosomal protein S14</fullName>
    </alternativeName>
</protein>
<sequence length="101" mass="11694">MAKVSAVEKNKRREIMVKRYAARRARLKAIVMDQKISLEERFKASVQLAELPRNSAKVRVRNRCEVSGRPRAYYRKLKMSRIALRELGSVGHIPGIIKSSW</sequence>